<keyword id="KW-1267">Proteomics identification</keyword>
<keyword id="KW-1185">Reference proteome</keyword>
<gene>
    <name evidence="4" type="primary">CDIPTOSP</name>
    <name evidence="4" type="synonym">CDIPT-AS1</name>
    <name evidence="1" type="synonym">T-ENOL</name>
</gene>
<reference key="1">
    <citation type="journal article" date="2004" name="Nature">
        <title>The sequence and analysis of duplication-rich human chromosome 16.</title>
        <authorList>
            <person name="Martin J."/>
            <person name="Han C."/>
            <person name="Gordon L.A."/>
            <person name="Terry A."/>
            <person name="Prabhakar S."/>
            <person name="She X."/>
            <person name="Xie G."/>
            <person name="Hellsten U."/>
            <person name="Chan Y.M."/>
            <person name="Altherr M."/>
            <person name="Couronne O."/>
            <person name="Aerts A."/>
            <person name="Bajorek E."/>
            <person name="Black S."/>
            <person name="Blumer H."/>
            <person name="Branscomb E."/>
            <person name="Brown N.C."/>
            <person name="Bruno W.J."/>
            <person name="Buckingham J.M."/>
            <person name="Callen D.F."/>
            <person name="Campbell C.S."/>
            <person name="Campbell M.L."/>
            <person name="Campbell E.W."/>
            <person name="Caoile C."/>
            <person name="Challacombe J.F."/>
            <person name="Chasteen L.A."/>
            <person name="Chertkov O."/>
            <person name="Chi H.C."/>
            <person name="Christensen M."/>
            <person name="Clark L.M."/>
            <person name="Cohn J.D."/>
            <person name="Denys M."/>
            <person name="Detter J.C."/>
            <person name="Dickson M."/>
            <person name="Dimitrijevic-Bussod M."/>
            <person name="Escobar J."/>
            <person name="Fawcett J.J."/>
            <person name="Flowers D."/>
            <person name="Fotopulos D."/>
            <person name="Glavina T."/>
            <person name="Gomez M."/>
            <person name="Gonzales E."/>
            <person name="Goodstein D."/>
            <person name="Goodwin L.A."/>
            <person name="Grady D.L."/>
            <person name="Grigoriev I."/>
            <person name="Groza M."/>
            <person name="Hammon N."/>
            <person name="Hawkins T."/>
            <person name="Haydu L."/>
            <person name="Hildebrand C.E."/>
            <person name="Huang W."/>
            <person name="Israni S."/>
            <person name="Jett J."/>
            <person name="Jewett P.B."/>
            <person name="Kadner K."/>
            <person name="Kimball H."/>
            <person name="Kobayashi A."/>
            <person name="Krawczyk M.-C."/>
            <person name="Leyba T."/>
            <person name="Longmire J.L."/>
            <person name="Lopez F."/>
            <person name="Lou Y."/>
            <person name="Lowry S."/>
            <person name="Ludeman T."/>
            <person name="Manohar C.F."/>
            <person name="Mark G.A."/>
            <person name="McMurray K.L."/>
            <person name="Meincke L.J."/>
            <person name="Morgan J."/>
            <person name="Moyzis R.K."/>
            <person name="Mundt M.O."/>
            <person name="Munk A.C."/>
            <person name="Nandkeshwar R.D."/>
            <person name="Pitluck S."/>
            <person name="Pollard M."/>
            <person name="Predki P."/>
            <person name="Parson-Quintana B."/>
            <person name="Ramirez L."/>
            <person name="Rash S."/>
            <person name="Retterer J."/>
            <person name="Ricke D.O."/>
            <person name="Robinson D.L."/>
            <person name="Rodriguez A."/>
            <person name="Salamov A."/>
            <person name="Saunders E.H."/>
            <person name="Scott D."/>
            <person name="Shough T."/>
            <person name="Stallings R.L."/>
            <person name="Stalvey M."/>
            <person name="Sutherland R.D."/>
            <person name="Tapia R."/>
            <person name="Tesmer J.G."/>
            <person name="Thayer N."/>
            <person name="Thompson L.S."/>
            <person name="Tice H."/>
            <person name="Torney D.C."/>
            <person name="Tran-Gyamfi M."/>
            <person name="Tsai M."/>
            <person name="Ulanovsky L.E."/>
            <person name="Ustaszewska A."/>
            <person name="Vo N."/>
            <person name="White P.S."/>
            <person name="Williams A.L."/>
            <person name="Wills P.L."/>
            <person name="Wu J.-R."/>
            <person name="Wu K."/>
            <person name="Yang J."/>
            <person name="DeJong P."/>
            <person name="Bruce D."/>
            <person name="Doggett N.A."/>
            <person name="Deaven L."/>
            <person name="Schmutz J."/>
            <person name="Grimwood J."/>
            <person name="Richardson P."/>
            <person name="Rokhsar D.S."/>
            <person name="Eichler E.E."/>
            <person name="Gilna P."/>
            <person name="Lucas S.M."/>
            <person name="Myers R.M."/>
            <person name="Rubin E.M."/>
            <person name="Pennacchio L.A."/>
        </authorList>
    </citation>
    <scope>NUCLEOTIDE SEQUENCE [LARGE SCALE GENOMIC DNA]</scope>
</reference>
<organism>
    <name type="scientific">Homo sapiens</name>
    <name type="common">Human</name>
    <dbReference type="NCBI Taxonomy" id="9606"/>
    <lineage>
        <taxon>Eukaryota</taxon>
        <taxon>Metazoa</taxon>
        <taxon>Chordata</taxon>
        <taxon>Craniata</taxon>
        <taxon>Vertebrata</taxon>
        <taxon>Euteleostomi</taxon>
        <taxon>Mammalia</taxon>
        <taxon>Eutheria</taxon>
        <taxon>Euarchontoglires</taxon>
        <taxon>Primates</taxon>
        <taxon>Haplorrhini</taxon>
        <taxon>Catarrhini</taxon>
        <taxon>Hominidae</taxon>
        <taxon>Homo</taxon>
    </lineage>
</organism>
<feature type="chain" id="PRO_0000436224" description="Putative protein T-ENOL">
    <location>
        <begin position="1"/>
        <end position="83"/>
    </location>
</feature>
<feature type="region of interest" description="Disordered" evidence="2">
    <location>
        <begin position="1"/>
        <end position="33"/>
    </location>
</feature>
<name>ENOL_HUMAN</name>
<proteinExistence type="evidence at protein level"/>
<evidence type="ECO:0000250" key="1">
    <source>
        <dbReference type="UniProtKB" id="P0DO93"/>
    </source>
</evidence>
<evidence type="ECO:0000256" key="2">
    <source>
        <dbReference type="SAM" id="MobiDB-lite"/>
    </source>
</evidence>
<evidence type="ECO:0000305" key="3"/>
<evidence type="ECO:0000312" key="4">
    <source>
        <dbReference type="HGNC" id="HGNC:48609"/>
    </source>
</evidence>
<sequence length="83" mass="9002">MASTPMGNEGEKKSSWPSQAAPSLRGGPASLSRSEEYLSQISAELMEEALCTACCHLNPVPIKKKQSQDQATQISKRAFFTKT</sequence>
<dbReference type="EMBL" id="AC120114">
    <property type="status" value="NOT_ANNOTATED_CDS"/>
    <property type="molecule type" value="Genomic_DNA"/>
</dbReference>
<dbReference type="BioMuta" id="HGNC:48609"/>
<dbReference type="jPOST" id="P0DO92"/>
<dbReference type="MassIVE" id="P0DO92"/>
<dbReference type="AGR" id="HGNC:48609"/>
<dbReference type="GeneCards" id="CDIPTOSP"/>
<dbReference type="HGNC" id="HGNC:48609">
    <property type="gene designation" value="CDIPTOSP"/>
</dbReference>
<dbReference type="neXtProt" id="NX_P0DO92"/>
<dbReference type="InParanoid" id="P0DO92"/>
<dbReference type="PAN-GO" id="P0DO92">
    <property type="GO annotations" value="0 GO annotations based on evolutionary models"/>
</dbReference>
<dbReference type="PhylomeDB" id="P0DO92"/>
<dbReference type="PathwayCommons" id="P0DO92"/>
<dbReference type="SignaLink" id="P0DO92"/>
<dbReference type="Pharos" id="P0DO92">
    <property type="development level" value="Tdark"/>
</dbReference>
<dbReference type="PRO" id="PR:P0DO92"/>
<dbReference type="Proteomes" id="UP000005640">
    <property type="component" value="Unplaced"/>
</dbReference>
<dbReference type="RNAct" id="P0DO92">
    <property type="molecule type" value="protein"/>
</dbReference>
<protein>
    <recommendedName>
        <fullName evidence="3">Putative protein T-ENOL</fullName>
    </recommendedName>
    <alternativeName>
        <fullName evidence="4">CDIP transferase opposite strand, pseudogene</fullName>
    </alternativeName>
    <alternativeName>
        <fullName evidence="4">CDIPT antisense RNA 1</fullName>
    </alternativeName>
</protein>
<accession>P0DO92</accession>